<evidence type="ECO:0000250" key="1"/>
<evidence type="ECO:0000250" key="2">
    <source>
        <dbReference type="UniProtKB" id="P14618"/>
    </source>
</evidence>
<evidence type="ECO:0000305" key="3"/>
<sequence length="591" mass="62986">MQTSPLPRRTKIVATIGPATQSKEVLRQLIQAGATTFRLNFSHGDHAYHQQSIRLIRQIAFELNQPVGILQDLQGPKIRVGKFLNDAGSVQLKNGDPYTLTSRPVECTETISSISYEYLADEVPSGARILLDDGKLEMLVEEVDTVARDLHCRVIVGGTLSSNKGVNFPGVCLSVKAMTDKDKEDLMFGLDQGVDWVALSFVRNPQDIDEIKGLIAAAGKSVPVIAKIEKHEAIKDMQAVLEKCDGVMVARGDLGVELPAEDVPILQKKLIATANRLGIPVITATQMLDSMVNSPRPTRAEVSDVANAILDGTDAVMLSNETAIGKFPVEAVAIMAKIAERIEQEDINPSQAEASRTSIPNAISSAVSQIAETLNAAAIMSLTKTGSTARHVSKFRPKTPILAVTPHVDVSRQLQLVWGVKPLLVLDLPSTSQTFQAAINVAQENHFLRDGDLVVMTAGTLQGVAGSTDLIKVEVVKAILGRGVGIGQGAVSGRARVASRPQAIAQFTQGEILVVPSTNADCVDMMRRAAGIITEEESLTSHAAIIGLRLGVPVIVGFKGATQKIRDGAIVTIDAQKGLIYSGALPPVSKG</sequence>
<proteinExistence type="inferred from homology"/>
<organism>
    <name type="scientific">Synechocystis sp. (strain ATCC 27184 / PCC 6803 / Kazusa)</name>
    <dbReference type="NCBI Taxonomy" id="1111708"/>
    <lineage>
        <taxon>Bacteria</taxon>
        <taxon>Bacillati</taxon>
        <taxon>Cyanobacteriota</taxon>
        <taxon>Cyanophyceae</taxon>
        <taxon>Synechococcales</taxon>
        <taxon>Merismopediaceae</taxon>
        <taxon>Synechocystis</taxon>
    </lineage>
</organism>
<dbReference type="EC" id="2.7.1.40"/>
<dbReference type="EMBL" id="BA000022">
    <property type="protein sequence ID" value="BAA17574.1"/>
    <property type="molecule type" value="Genomic_DNA"/>
</dbReference>
<dbReference type="PIR" id="S77240">
    <property type="entry name" value="S77240"/>
</dbReference>
<dbReference type="SMR" id="P73534"/>
<dbReference type="FunCoup" id="P73534">
    <property type="interactions" value="353"/>
</dbReference>
<dbReference type="IntAct" id="P73534">
    <property type="interactions" value="2"/>
</dbReference>
<dbReference type="STRING" id="1148.gene:10498441"/>
<dbReference type="PaxDb" id="1148-1652654"/>
<dbReference type="EnsemblBacteria" id="BAA17574">
    <property type="protein sequence ID" value="BAA17574"/>
    <property type="gene ID" value="BAA17574"/>
</dbReference>
<dbReference type="KEGG" id="syn:sll1275"/>
<dbReference type="eggNOG" id="COG0469">
    <property type="taxonomic scope" value="Bacteria"/>
</dbReference>
<dbReference type="InParanoid" id="P73534"/>
<dbReference type="PhylomeDB" id="P73534"/>
<dbReference type="UniPathway" id="UPA00109">
    <property type="reaction ID" value="UER00188"/>
</dbReference>
<dbReference type="Proteomes" id="UP000001425">
    <property type="component" value="Chromosome"/>
</dbReference>
<dbReference type="GO" id="GO:0005737">
    <property type="term" value="C:cytoplasm"/>
    <property type="evidence" value="ECO:0000318"/>
    <property type="project" value="GO_Central"/>
</dbReference>
<dbReference type="GO" id="GO:0005829">
    <property type="term" value="C:cytosol"/>
    <property type="evidence" value="ECO:0000318"/>
    <property type="project" value="GO_Central"/>
</dbReference>
<dbReference type="GO" id="GO:0005524">
    <property type="term" value="F:ATP binding"/>
    <property type="evidence" value="ECO:0007669"/>
    <property type="project" value="UniProtKB-KW"/>
</dbReference>
<dbReference type="GO" id="GO:0016301">
    <property type="term" value="F:kinase activity"/>
    <property type="evidence" value="ECO:0007669"/>
    <property type="project" value="UniProtKB-KW"/>
</dbReference>
<dbReference type="GO" id="GO:0000287">
    <property type="term" value="F:magnesium ion binding"/>
    <property type="evidence" value="ECO:0007669"/>
    <property type="project" value="InterPro"/>
</dbReference>
<dbReference type="GO" id="GO:0030955">
    <property type="term" value="F:potassium ion binding"/>
    <property type="evidence" value="ECO:0007669"/>
    <property type="project" value="InterPro"/>
</dbReference>
<dbReference type="GO" id="GO:0004743">
    <property type="term" value="F:pyruvate kinase activity"/>
    <property type="evidence" value="ECO:0000318"/>
    <property type="project" value="GO_Central"/>
</dbReference>
<dbReference type="GO" id="GO:0006096">
    <property type="term" value="P:glycolytic process"/>
    <property type="evidence" value="ECO:0000318"/>
    <property type="project" value="GO_Central"/>
</dbReference>
<dbReference type="FunFam" id="2.40.33.10:FF:000001">
    <property type="entry name" value="Pyruvate kinase"/>
    <property type="match status" value="1"/>
</dbReference>
<dbReference type="FunFam" id="3.20.20.60:FF:000025">
    <property type="entry name" value="Pyruvate kinase"/>
    <property type="match status" value="1"/>
</dbReference>
<dbReference type="FunFam" id="3.40.1380.20:FF:000013">
    <property type="entry name" value="Pyruvate kinase"/>
    <property type="match status" value="1"/>
</dbReference>
<dbReference type="FunFam" id="3.50.30.10:FF:000004">
    <property type="entry name" value="Pyruvate kinase"/>
    <property type="match status" value="1"/>
</dbReference>
<dbReference type="Gene3D" id="3.20.20.60">
    <property type="entry name" value="Phosphoenolpyruvate-binding domains"/>
    <property type="match status" value="1"/>
</dbReference>
<dbReference type="Gene3D" id="3.50.30.10">
    <property type="entry name" value="Phosphohistidine domain"/>
    <property type="match status" value="1"/>
</dbReference>
<dbReference type="Gene3D" id="2.40.33.10">
    <property type="entry name" value="PK beta-barrel domain-like"/>
    <property type="match status" value="1"/>
</dbReference>
<dbReference type="Gene3D" id="3.40.1380.20">
    <property type="entry name" value="Pyruvate kinase, C-terminal domain"/>
    <property type="match status" value="1"/>
</dbReference>
<dbReference type="InterPro" id="IPR008279">
    <property type="entry name" value="PEP-util_enz_mobile_dom"/>
</dbReference>
<dbReference type="InterPro" id="IPR036637">
    <property type="entry name" value="Phosphohistidine_dom_sf"/>
</dbReference>
<dbReference type="InterPro" id="IPR001697">
    <property type="entry name" value="Pyr_Knase"/>
</dbReference>
<dbReference type="InterPro" id="IPR015813">
    <property type="entry name" value="Pyrv/PenolPyrv_kinase-like_dom"/>
</dbReference>
<dbReference type="InterPro" id="IPR040442">
    <property type="entry name" value="Pyrv_kinase-like_dom_sf"/>
</dbReference>
<dbReference type="InterPro" id="IPR011037">
    <property type="entry name" value="Pyrv_Knase-like_insert_dom_sf"/>
</dbReference>
<dbReference type="InterPro" id="IPR018209">
    <property type="entry name" value="Pyrv_Knase_AS"/>
</dbReference>
<dbReference type="InterPro" id="IPR015793">
    <property type="entry name" value="Pyrv_Knase_brl"/>
</dbReference>
<dbReference type="InterPro" id="IPR015795">
    <property type="entry name" value="Pyrv_Knase_C"/>
</dbReference>
<dbReference type="InterPro" id="IPR036918">
    <property type="entry name" value="Pyrv_Knase_C_sf"/>
</dbReference>
<dbReference type="InterPro" id="IPR015806">
    <property type="entry name" value="Pyrv_Knase_insert_dom_sf"/>
</dbReference>
<dbReference type="NCBIfam" id="NF004491">
    <property type="entry name" value="PRK05826.1"/>
    <property type="match status" value="1"/>
</dbReference>
<dbReference type="NCBIfam" id="NF004978">
    <property type="entry name" value="PRK06354.1"/>
    <property type="match status" value="1"/>
</dbReference>
<dbReference type="NCBIfam" id="TIGR01064">
    <property type="entry name" value="pyruv_kin"/>
    <property type="match status" value="1"/>
</dbReference>
<dbReference type="PANTHER" id="PTHR11817">
    <property type="entry name" value="PYRUVATE KINASE"/>
    <property type="match status" value="1"/>
</dbReference>
<dbReference type="Pfam" id="PF00391">
    <property type="entry name" value="PEP-utilizers"/>
    <property type="match status" value="1"/>
</dbReference>
<dbReference type="Pfam" id="PF00224">
    <property type="entry name" value="PK"/>
    <property type="match status" value="1"/>
</dbReference>
<dbReference type="Pfam" id="PF02887">
    <property type="entry name" value="PK_C"/>
    <property type="match status" value="1"/>
</dbReference>
<dbReference type="PRINTS" id="PR01050">
    <property type="entry name" value="PYRUVTKNASE"/>
</dbReference>
<dbReference type="SUPFAM" id="SSF51621">
    <property type="entry name" value="Phosphoenolpyruvate/pyruvate domain"/>
    <property type="match status" value="1"/>
</dbReference>
<dbReference type="SUPFAM" id="SSF52009">
    <property type="entry name" value="Phosphohistidine domain"/>
    <property type="match status" value="1"/>
</dbReference>
<dbReference type="SUPFAM" id="SSF50800">
    <property type="entry name" value="PK beta-barrel domain-like"/>
    <property type="match status" value="1"/>
</dbReference>
<dbReference type="SUPFAM" id="SSF52935">
    <property type="entry name" value="PK C-terminal domain-like"/>
    <property type="match status" value="1"/>
</dbReference>
<dbReference type="PROSITE" id="PS00110">
    <property type="entry name" value="PYRUVATE_KINASE"/>
    <property type="match status" value="1"/>
</dbReference>
<protein>
    <recommendedName>
        <fullName>Pyruvate kinase 2</fullName>
        <shortName>PK 2</shortName>
        <ecNumber>2.7.1.40</ecNumber>
    </recommendedName>
</protein>
<gene>
    <name type="primary">pyk2</name>
    <name type="ordered locus">sll1275</name>
</gene>
<accession>P73534</accession>
<name>KPYK2_SYNY3</name>
<reference key="1">
    <citation type="journal article" date="1996" name="DNA Res.">
        <title>Sequence analysis of the genome of the unicellular cyanobacterium Synechocystis sp. strain PCC6803. II. Sequence determination of the entire genome and assignment of potential protein-coding regions.</title>
        <authorList>
            <person name="Kaneko T."/>
            <person name="Sato S."/>
            <person name="Kotani H."/>
            <person name="Tanaka A."/>
            <person name="Asamizu E."/>
            <person name="Nakamura Y."/>
            <person name="Miyajima N."/>
            <person name="Hirosawa M."/>
            <person name="Sugiura M."/>
            <person name="Sasamoto S."/>
            <person name="Kimura T."/>
            <person name="Hosouchi T."/>
            <person name="Matsuno A."/>
            <person name="Muraki A."/>
            <person name="Nakazaki N."/>
            <person name="Naruo K."/>
            <person name="Okumura S."/>
            <person name="Shimpo S."/>
            <person name="Takeuchi C."/>
            <person name="Wada T."/>
            <person name="Watanabe A."/>
            <person name="Yamada M."/>
            <person name="Yasuda M."/>
            <person name="Tabata S."/>
        </authorList>
    </citation>
    <scope>NUCLEOTIDE SEQUENCE [LARGE SCALE GENOMIC DNA]</scope>
    <source>
        <strain>ATCC 27184 / PCC 6803 / Kazusa</strain>
    </source>
</reference>
<keyword id="KW-0067">ATP-binding</keyword>
<keyword id="KW-0324">Glycolysis</keyword>
<keyword id="KW-0418">Kinase</keyword>
<keyword id="KW-0460">Magnesium</keyword>
<keyword id="KW-0479">Metal-binding</keyword>
<keyword id="KW-0547">Nucleotide-binding</keyword>
<keyword id="KW-0630">Potassium</keyword>
<keyword id="KW-0670">Pyruvate</keyword>
<keyword id="KW-1185">Reference proteome</keyword>
<keyword id="KW-0808">Transferase</keyword>
<feature type="chain" id="PRO_0000112086" description="Pyruvate kinase 2">
    <location>
        <begin position="1"/>
        <end position="591"/>
    </location>
</feature>
<feature type="binding site" evidence="1">
    <location>
        <position position="38"/>
    </location>
    <ligand>
        <name>substrate</name>
    </ligand>
</feature>
<feature type="binding site" evidence="2">
    <location>
        <begin position="40"/>
        <end position="43"/>
    </location>
    <ligand>
        <name>ATP</name>
        <dbReference type="ChEBI" id="CHEBI:30616"/>
    </ligand>
</feature>
<feature type="binding site" evidence="1">
    <location>
        <position position="40"/>
    </location>
    <ligand>
        <name>K(+)</name>
        <dbReference type="ChEBI" id="CHEBI:29103"/>
    </ligand>
</feature>
<feature type="binding site" evidence="1">
    <location>
        <position position="42"/>
    </location>
    <ligand>
        <name>K(+)</name>
        <dbReference type="ChEBI" id="CHEBI:29103"/>
    </ligand>
</feature>
<feature type="binding site" evidence="1">
    <location>
        <position position="72"/>
    </location>
    <ligand>
        <name>K(+)</name>
        <dbReference type="ChEBI" id="CHEBI:29103"/>
    </ligand>
</feature>
<feature type="binding site" evidence="2">
    <location>
        <position position="79"/>
    </location>
    <ligand>
        <name>ATP</name>
        <dbReference type="ChEBI" id="CHEBI:30616"/>
    </ligand>
</feature>
<feature type="binding site" evidence="2">
    <location>
        <position position="164"/>
    </location>
    <ligand>
        <name>ATP</name>
        <dbReference type="ChEBI" id="CHEBI:30616"/>
    </ligand>
</feature>
<feature type="binding site" evidence="1">
    <location>
        <position position="229"/>
    </location>
    <ligand>
        <name>Mg(2+)</name>
        <dbReference type="ChEBI" id="CHEBI:18420"/>
    </ligand>
</feature>
<feature type="binding site" evidence="1">
    <location>
        <position position="252"/>
    </location>
    <ligand>
        <name>substrate</name>
    </ligand>
</feature>
<feature type="binding site" evidence="1">
    <location>
        <position position="253"/>
    </location>
    <ligand>
        <name>Mg(2+)</name>
        <dbReference type="ChEBI" id="CHEBI:18420"/>
    </ligand>
</feature>
<feature type="binding site" evidence="1">
    <location>
        <position position="253"/>
    </location>
    <ligand>
        <name>substrate</name>
    </ligand>
</feature>
<feature type="binding site" evidence="1">
    <location>
        <position position="285"/>
    </location>
    <ligand>
        <name>substrate</name>
    </ligand>
</feature>
<feature type="site" description="Transition state stabilizer" evidence="1">
    <location>
        <position position="227"/>
    </location>
</feature>
<comment type="catalytic activity">
    <reaction>
        <text>pyruvate + ATP = phosphoenolpyruvate + ADP + H(+)</text>
        <dbReference type="Rhea" id="RHEA:18157"/>
        <dbReference type="ChEBI" id="CHEBI:15361"/>
        <dbReference type="ChEBI" id="CHEBI:15378"/>
        <dbReference type="ChEBI" id="CHEBI:30616"/>
        <dbReference type="ChEBI" id="CHEBI:58702"/>
        <dbReference type="ChEBI" id="CHEBI:456216"/>
        <dbReference type="EC" id="2.7.1.40"/>
    </reaction>
</comment>
<comment type="cofactor">
    <cofactor>
        <name>Mg(2+)</name>
        <dbReference type="ChEBI" id="CHEBI:18420"/>
    </cofactor>
</comment>
<comment type="cofactor">
    <cofactor>
        <name>K(+)</name>
        <dbReference type="ChEBI" id="CHEBI:29103"/>
    </cofactor>
</comment>
<comment type="pathway">
    <text>Carbohydrate degradation; glycolysis; pyruvate from D-glyceraldehyde 3-phosphate: step 5/5.</text>
</comment>
<comment type="subunit">
    <text evidence="1">Homotetramer.</text>
</comment>
<comment type="similarity">
    <text evidence="3">Belongs to the pyruvate kinase family.</text>
</comment>
<comment type="similarity">
    <text evidence="3">In the C-terminal section; belongs to the PEP-utilizing enzyme family.</text>
</comment>